<reference key="1">
    <citation type="journal article" date="2004" name="Genome Res.">
        <title>The status, quality, and expansion of the NIH full-length cDNA project: the Mammalian Gene Collection (MGC).</title>
        <authorList>
            <consortium name="The MGC Project Team"/>
        </authorList>
    </citation>
    <scope>NUCLEOTIDE SEQUENCE [LARGE SCALE MRNA]</scope>
    <source>
        <tissue>Testis</tissue>
    </source>
</reference>
<sequence>MSAAQGWDRNRRRGGGAAGGASGVSGAGAAGGGRGTGQLNRFVQLSGRPHLPGHRPPPARSGHRCVADNTNLYVFGGYNPDYDESGGPDNEDYPLFRELWRYHFATGVWHQMGTDGYMPRELASMSLVLHGNNLLVFGGTGIPFGESNGNDVHVCNVKYKRWALLSCRGKRPSRIYGQAMALINGSLYVFGGTTGYIYSTDLHKLDLNTMVWTQLKPNNLSCDLPEERYRHEIAHDGQRIYILGGGTSWTAYSLNKIHAYNLETNAWEEIATKPHEKIGFPAARRCHSCVQIKNDVFICGGYNGEVILGDIWKLNLQTFQWVKLPATMPEPVYFHCAAVTPAGCMYIHGGVVNIHENKRTGSLFKIWLVVPSLLELAWEKLLAAFPNLANLSRTQLLHLGLTQELIERLK</sequence>
<dbReference type="EMBL" id="BC085351">
    <property type="protein sequence ID" value="AAH85351.1"/>
    <property type="molecule type" value="mRNA"/>
</dbReference>
<dbReference type="RefSeq" id="NP_001017456.1">
    <property type="nucleotide sequence ID" value="NM_001017456.1"/>
</dbReference>
<dbReference type="SMR" id="Q5U3Y0"/>
<dbReference type="FunCoup" id="Q5U3Y0">
    <property type="interactions" value="4936"/>
</dbReference>
<dbReference type="STRING" id="10116.ENSRNOP00000075612"/>
<dbReference type="GlyGen" id="Q5U3Y0">
    <property type="glycosylation" value="1 site"/>
</dbReference>
<dbReference type="iPTMnet" id="Q5U3Y0"/>
<dbReference type="PhosphoSitePlus" id="Q5U3Y0"/>
<dbReference type="PaxDb" id="10116-ENSRNOP00000038586"/>
<dbReference type="Ensembl" id="ENSRNOT00000034429.5">
    <property type="protein sequence ID" value="ENSRNOP00000038586.4"/>
    <property type="gene ID" value="ENSRNOG00000010267.8"/>
</dbReference>
<dbReference type="GeneID" id="312199"/>
<dbReference type="KEGG" id="rno:312199"/>
<dbReference type="UCSC" id="RGD:1309792">
    <property type="organism name" value="rat"/>
</dbReference>
<dbReference type="AGR" id="RGD:1309792"/>
<dbReference type="CTD" id="23008"/>
<dbReference type="RGD" id="1309792">
    <property type="gene designation" value="Klhdc10"/>
</dbReference>
<dbReference type="eggNOG" id="KOG0379">
    <property type="taxonomic scope" value="Eukaryota"/>
</dbReference>
<dbReference type="GeneTree" id="ENSGT00940000155977"/>
<dbReference type="HOGENOM" id="CLU_030914_0_0_1"/>
<dbReference type="InParanoid" id="Q5U3Y0"/>
<dbReference type="OrthoDB" id="7676067at2759"/>
<dbReference type="UniPathway" id="UPA00143"/>
<dbReference type="PRO" id="PR:Q5U3Y0"/>
<dbReference type="Proteomes" id="UP000002494">
    <property type="component" value="Chromosome 4"/>
</dbReference>
<dbReference type="Bgee" id="ENSRNOG00000010267">
    <property type="expression patterns" value="Expressed in testis and 19 other cell types or tissues"/>
</dbReference>
<dbReference type="ExpressionAtlas" id="Q5U3Y0">
    <property type="expression patterns" value="baseline and differential"/>
</dbReference>
<dbReference type="GO" id="GO:0031462">
    <property type="term" value="C:Cul2-RING ubiquitin ligase complex"/>
    <property type="evidence" value="ECO:0000250"/>
    <property type="project" value="UniProtKB"/>
</dbReference>
<dbReference type="GO" id="GO:0005737">
    <property type="term" value="C:cytoplasm"/>
    <property type="evidence" value="ECO:0000266"/>
    <property type="project" value="RGD"/>
</dbReference>
<dbReference type="GO" id="GO:0005634">
    <property type="term" value="C:nucleus"/>
    <property type="evidence" value="ECO:0007669"/>
    <property type="project" value="UniProtKB-SubCell"/>
</dbReference>
<dbReference type="GO" id="GO:1990756">
    <property type="term" value="F:ubiquitin-like ligase-substrate adaptor activity"/>
    <property type="evidence" value="ECO:0000250"/>
    <property type="project" value="UniProtKB"/>
</dbReference>
<dbReference type="GO" id="GO:0032874">
    <property type="term" value="P:positive regulation of stress-activated MAPK cascade"/>
    <property type="evidence" value="ECO:0000318"/>
    <property type="project" value="GO_Central"/>
</dbReference>
<dbReference type="GO" id="GO:0016567">
    <property type="term" value="P:protein ubiquitination"/>
    <property type="evidence" value="ECO:0007669"/>
    <property type="project" value="UniProtKB-UniPathway"/>
</dbReference>
<dbReference type="GO" id="GO:0072344">
    <property type="term" value="P:rescue of stalled ribosome"/>
    <property type="evidence" value="ECO:0000250"/>
    <property type="project" value="UniProtKB"/>
</dbReference>
<dbReference type="GO" id="GO:0140627">
    <property type="term" value="P:ubiquitin-dependent protein catabolic process via the C-end degron rule pathway"/>
    <property type="evidence" value="ECO:0000250"/>
    <property type="project" value="UniProtKB"/>
</dbReference>
<dbReference type="FunFam" id="2.120.10.80:FF:000009">
    <property type="entry name" value="Kelch domain-containing protein 10"/>
    <property type="match status" value="1"/>
</dbReference>
<dbReference type="FunFam" id="2.120.10.80:FF:000010">
    <property type="entry name" value="kelch domain-containing protein 10"/>
    <property type="match status" value="1"/>
</dbReference>
<dbReference type="Gene3D" id="2.120.10.80">
    <property type="entry name" value="Kelch-type beta propeller"/>
    <property type="match status" value="2"/>
</dbReference>
<dbReference type="InterPro" id="IPR011043">
    <property type="entry name" value="Gal_Oxase/kelch_b-propeller"/>
</dbReference>
<dbReference type="InterPro" id="IPR015915">
    <property type="entry name" value="Kelch-typ_b-propeller"/>
</dbReference>
<dbReference type="InterPro" id="IPR006652">
    <property type="entry name" value="Kelch_1"/>
</dbReference>
<dbReference type="InterPro" id="IPR052125">
    <property type="entry name" value="KLHDC10"/>
</dbReference>
<dbReference type="PANTHER" id="PTHR46428">
    <property type="entry name" value="KELCH DOMAIN-CONTAINING PROTEIN 10"/>
    <property type="match status" value="1"/>
</dbReference>
<dbReference type="PANTHER" id="PTHR46428:SF1">
    <property type="entry name" value="KELCH DOMAIN-CONTAINING PROTEIN 10"/>
    <property type="match status" value="1"/>
</dbReference>
<dbReference type="Pfam" id="PF13418">
    <property type="entry name" value="Kelch_4"/>
    <property type="match status" value="1"/>
</dbReference>
<dbReference type="Pfam" id="PF24681">
    <property type="entry name" value="Kelch_KLHDC2_KLHL20_DRC7"/>
    <property type="match status" value="1"/>
</dbReference>
<dbReference type="SMART" id="SM00612">
    <property type="entry name" value="Kelch"/>
    <property type="match status" value="2"/>
</dbReference>
<dbReference type="SUPFAM" id="SSF50965">
    <property type="entry name" value="Galactose oxidase, central domain"/>
    <property type="match status" value="1"/>
</dbReference>
<dbReference type="SUPFAM" id="SSF117281">
    <property type="entry name" value="Kelch motif"/>
    <property type="match status" value="1"/>
</dbReference>
<comment type="function">
    <text evidence="1 2">Substrate-recognition component of a Cul2-RING (CRL2) E3 ubiquitin-protein ligase complex of the DesCEND (destruction via C-end degrons) pathway, which recognizes a C-degron located at the extreme C-terminus of target proteins, leading to their ubiquitination and degradation (By similarity). The C-degron recognized by the DesCEND pathway is usually a motif of less than ten residues and can be present in full-length proteins, truncated proteins or proteolytically cleaved forms (By similarity). The CRL2(KLHDC10) complex specifically recognizes proteins with a proline-glycine (Pro-Gly) or an alanine tail (CAT tail) at the C-terminus, leading to their ubiquitination and degradation (By similarity). The CRL2(KLHDC10) complex is involved in the ribosome-associated quality control (RQC) pathway, which mediates the extraction of incompletely synthesized nascent chains from stalled ribosomes: CRL2(KLHDC10) acts downstream of NEMF and recognizes CAT tails associated with stalled nascent chains, leading to their ubiquitination and degradation (By similarity). Participates in the oxidative stress-induced cell death through MAP3K5 activation. Inhibits PPP5C phosphatase activity on MAP3K5 (By similarity). Acts as a regulator of necroptosis (By similarity).</text>
</comment>
<comment type="pathway">
    <text evidence="2">Protein modification; protein ubiquitination.</text>
</comment>
<comment type="subunit">
    <text evidence="2">Component of a CRL2 E3 ubiquitin-protein ligase complex, also named ECS (Elongin BC-CUL2/5-SOCS-box protein) complex, composed of CUL2, Elongin BC (ELOB and ELOC), RBX1 and substrate-specific adapter KLHDC10. Interacts (via the 6 Kelch repeats) with PPP5C.</text>
</comment>
<comment type="subcellular location">
    <subcellularLocation>
        <location evidence="2">Nucleus</location>
    </subcellularLocation>
    <subcellularLocation>
        <location evidence="2">Cytoplasm</location>
    </subcellularLocation>
</comment>
<comment type="similarity">
    <text evidence="4">Belongs to the KLHDC10 family.</text>
</comment>
<evidence type="ECO:0000250" key="1">
    <source>
        <dbReference type="UniProtKB" id="Q6PAR0"/>
    </source>
</evidence>
<evidence type="ECO:0000250" key="2">
    <source>
        <dbReference type="UniProtKB" id="Q6PID8"/>
    </source>
</evidence>
<evidence type="ECO:0000256" key="3">
    <source>
        <dbReference type="SAM" id="MobiDB-lite"/>
    </source>
</evidence>
<evidence type="ECO:0000305" key="4"/>
<evidence type="ECO:0000312" key="5">
    <source>
        <dbReference type="RGD" id="1309792"/>
    </source>
</evidence>
<name>KLD10_RAT</name>
<organism>
    <name type="scientific">Rattus norvegicus</name>
    <name type="common">Rat</name>
    <dbReference type="NCBI Taxonomy" id="10116"/>
    <lineage>
        <taxon>Eukaryota</taxon>
        <taxon>Metazoa</taxon>
        <taxon>Chordata</taxon>
        <taxon>Craniata</taxon>
        <taxon>Vertebrata</taxon>
        <taxon>Euteleostomi</taxon>
        <taxon>Mammalia</taxon>
        <taxon>Eutheria</taxon>
        <taxon>Euarchontoglires</taxon>
        <taxon>Glires</taxon>
        <taxon>Rodentia</taxon>
        <taxon>Myomorpha</taxon>
        <taxon>Muroidea</taxon>
        <taxon>Muridae</taxon>
        <taxon>Murinae</taxon>
        <taxon>Rattus</taxon>
    </lineage>
</organism>
<feature type="chain" id="PRO_0000319438" description="Kelch domain-containing protein 10">
    <location>
        <begin position="1"/>
        <end position="410"/>
    </location>
</feature>
<feature type="repeat" description="Kelch 1" evidence="2">
    <location>
        <begin position="87"/>
        <end position="154"/>
    </location>
</feature>
<feature type="repeat" description="Kelch 2" evidence="2">
    <location>
        <begin position="155"/>
        <end position="198"/>
    </location>
</feature>
<feature type="repeat" description="Kelch 3" evidence="2">
    <location>
        <begin position="199"/>
        <end position="260"/>
    </location>
</feature>
<feature type="repeat" description="Kelch 4" evidence="2">
    <location>
        <begin position="261"/>
        <end position="319"/>
    </location>
</feature>
<feature type="repeat" description="Kelch 5" evidence="2">
    <location>
        <begin position="320"/>
        <end position="364"/>
    </location>
</feature>
<feature type="repeat" description="Kelch 6" evidence="2">
    <location>
        <begin position="365"/>
        <end position="403"/>
    </location>
</feature>
<feature type="region of interest" description="Disordered" evidence="3">
    <location>
        <begin position="1"/>
        <end position="40"/>
    </location>
</feature>
<feature type="region of interest" description="Interaction with CUL2" evidence="2">
    <location>
        <begin position="369"/>
        <end position="410"/>
    </location>
</feature>
<feature type="compositionally biased region" description="Gly residues" evidence="3">
    <location>
        <begin position="15"/>
        <end position="36"/>
    </location>
</feature>
<feature type="modified residue" description="Omega-N-methylarginine" evidence="1">
    <location>
        <position position="13"/>
    </location>
</feature>
<proteinExistence type="evidence at transcript level"/>
<protein>
    <recommendedName>
        <fullName evidence="4">Kelch domain-containing protein 10</fullName>
    </recommendedName>
</protein>
<keyword id="KW-0963">Cytoplasm</keyword>
<keyword id="KW-0880">Kelch repeat</keyword>
<keyword id="KW-0488">Methylation</keyword>
<keyword id="KW-0539">Nucleus</keyword>
<keyword id="KW-1185">Reference proteome</keyword>
<keyword id="KW-0677">Repeat</keyword>
<keyword id="KW-0833">Ubl conjugation pathway</keyword>
<gene>
    <name evidence="5" type="primary">Klhdc10</name>
</gene>
<accession>Q5U3Y0</accession>